<dbReference type="EC" id="3.6.-.-" evidence="1"/>
<dbReference type="EMBL" id="CP000822">
    <property type="protein sequence ID" value="ABV11231.1"/>
    <property type="status" value="ALT_INIT"/>
    <property type="molecule type" value="Genomic_DNA"/>
</dbReference>
<dbReference type="RefSeq" id="WP_024130083.1">
    <property type="nucleotide sequence ID" value="NC_009792.1"/>
</dbReference>
<dbReference type="SMR" id="A8ACL8"/>
<dbReference type="STRING" id="290338.CKO_00052"/>
<dbReference type="GeneID" id="45134358"/>
<dbReference type="KEGG" id="cko:CKO_00052"/>
<dbReference type="HOGENOM" id="CLU_019624_4_1_6"/>
<dbReference type="OrthoDB" id="9805918at2"/>
<dbReference type="Proteomes" id="UP000008148">
    <property type="component" value="Chromosome"/>
</dbReference>
<dbReference type="GO" id="GO:0005829">
    <property type="term" value="C:cytosol"/>
    <property type="evidence" value="ECO:0007669"/>
    <property type="project" value="TreeGrafter"/>
</dbReference>
<dbReference type="GO" id="GO:0005525">
    <property type="term" value="F:GTP binding"/>
    <property type="evidence" value="ECO:0007669"/>
    <property type="project" value="UniProtKB-UniRule"/>
</dbReference>
<dbReference type="GO" id="GO:0003924">
    <property type="term" value="F:GTPase activity"/>
    <property type="evidence" value="ECO:0007669"/>
    <property type="project" value="UniProtKB-UniRule"/>
</dbReference>
<dbReference type="GO" id="GO:0046872">
    <property type="term" value="F:metal ion binding"/>
    <property type="evidence" value="ECO:0007669"/>
    <property type="project" value="UniProtKB-KW"/>
</dbReference>
<dbReference type="GO" id="GO:0030488">
    <property type="term" value="P:tRNA methylation"/>
    <property type="evidence" value="ECO:0007669"/>
    <property type="project" value="TreeGrafter"/>
</dbReference>
<dbReference type="GO" id="GO:0002098">
    <property type="term" value="P:tRNA wobble uridine modification"/>
    <property type="evidence" value="ECO:0007669"/>
    <property type="project" value="TreeGrafter"/>
</dbReference>
<dbReference type="CDD" id="cd04164">
    <property type="entry name" value="trmE"/>
    <property type="match status" value="1"/>
</dbReference>
<dbReference type="CDD" id="cd14858">
    <property type="entry name" value="TrmE_N"/>
    <property type="match status" value="1"/>
</dbReference>
<dbReference type="FunFam" id="3.30.1360.120:FF:000001">
    <property type="entry name" value="tRNA modification GTPase MnmE"/>
    <property type="match status" value="1"/>
</dbReference>
<dbReference type="FunFam" id="3.40.50.300:FF:000249">
    <property type="entry name" value="tRNA modification GTPase MnmE"/>
    <property type="match status" value="1"/>
</dbReference>
<dbReference type="Gene3D" id="3.40.50.300">
    <property type="entry name" value="P-loop containing nucleotide triphosphate hydrolases"/>
    <property type="match status" value="1"/>
</dbReference>
<dbReference type="Gene3D" id="3.30.1360.120">
    <property type="entry name" value="Probable tRNA modification gtpase trme, domain 1"/>
    <property type="match status" value="1"/>
</dbReference>
<dbReference type="Gene3D" id="1.20.120.430">
    <property type="entry name" value="tRNA modification GTPase MnmE domain 2"/>
    <property type="match status" value="1"/>
</dbReference>
<dbReference type="HAMAP" id="MF_00379">
    <property type="entry name" value="GTPase_MnmE"/>
    <property type="match status" value="1"/>
</dbReference>
<dbReference type="InterPro" id="IPR031168">
    <property type="entry name" value="G_TrmE"/>
</dbReference>
<dbReference type="InterPro" id="IPR006073">
    <property type="entry name" value="GTP-bd"/>
</dbReference>
<dbReference type="InterPro" id="IPR018948">
    <property type="entry name" value="GTP-bd_TrmE_N"/>
</dbReference>
<dbReference type="InterPro" id="IPR004520">
    <property type="entry name" value="GTPase_MnmE"/>
</dbReference>
<dbReference type="InterPro" id="IPR027368">
    <property type="entry name" value="MnmE_dom2"/>
</dbReference>
<dbReference type="InterPro" id="IPR025867">
    <property type="entry name" value="MnmE_helical"/>
</dbReference>
<dbReference type="InterPro" id="IPR027417">
    <property type="entry name" value="P-loop_NTPase"/>
</dbReference>
<dbReference type="InterPro" id="IPR005225">
    <property type="entry name" value="Small_GTP-bd"/>
</dbReference>
<dbReference type="InterPro" id="IPR027266">
    <property type="entry name" value="TrmE/GcvT_dom1"/>
</dbReference>
<dbReference type="NCBIfam" id="TIGR00450">
    <property type="entry name" value="mnmE_trmE_thdF"/>
    <property type="match status" value="1"/>
</dbReference>
<dbReference type="NCBIfam" id="NF003661">
    <property type="entry name" value="PRK05291.1-3"/>
    <property type="match status" value="1"/>
</dbReference>
<dbReference type="NCBIfam" id="TIGR00231">
    <property type="entry name" value="small_GTP"/>
    <property type="match status" value="1"/>
</dbReference>
<dbReference type="PANTHER" id="PTHR42714">
    <property type="entry name" value="TRNA MODIFICATION GTPASE GTPBP3"/>
    <property type="match status" value="1"/>
</dbReference>
<dbReference type="PANTHER" id="PTHR42714:SF2">
    <property type="entry name" value="TRNA MODIFICATION GTPASE GTPBP3, MITOCHONDRIAL"/>
    <property type="match status" value="1"/>
</dbReference>
<dbReference type="Pfam" id="PF01926">
    <property type="entry name" value="MMR_HSR1"/>
    <property type="match status" value="1"/>
</dbReference>
<dbReference type="Pfam" id="PF12631">
    <property type="entry name" value="MnmE_helical"/>
    <property type="match status" value="1"/>
</dbReference>
<dbReference type="Pfam" id="PF10396">
    <property type="entry name" value="TrmE_N"/>
    <property type="match status" value="1"/>
</dbReference>
<dbReference type="SUPFAM" id="SSF52540">
    <property type="entry name" value="P-loop containing nucleoside triphosphate hydrolases"/>
    <property type="match status" value="1"/>
</dbReference>
<dbReference type="SUPFAM" id="SSF116878">
    <property type="entry name" value="TrmE connector domain"/>
    <property type="match status" value="1"/>
</dbReference>
<dbReference type="PROSITE" id="PS51709">
    <property type="entry name" value="G_TRME"/>
    <property type="match status" value="1"/>
</dbReference>
<organism>
    <name type="scientific">Citrobacter koseri (strain ATCC BAA-895 / CDC 4225-83 / SGSC4696)</name>
    <dbReference type="NCBI Taxonomy" id="290338"/>
    <lineage>
        <taxon>Bacteria</taxon>
        <taxon>Pseudomonadati</taxon>
        <taxon>Pseudomonadota</taxon>
        <taxon>Gammaproteobacteria</taxon>
        <taxon>Enterobacterales</taxon>
        <taxon>Enterobacteriaceae</taxon>
        <taxon>Citrobacter</taxon>
    </lineage>
</organism>
<keyword id="KW-0963">Cytoplasm</keyword>
<keyword id="KW-0342">GTP-binding</keyword>
<keyword id="KW-0378">Hydrolase</keyword>
<keyword id="KW-0460">Magnesium</keyword>
<keyword id="KW-0479">Metal-binding</keyword>
<keyword id="KW-0547">Nucleotide-binding</keyword>
<keyword id="KW-0630">Potassium</keyword>
<keyword id="KW-1185">Reference proteome</keyword>
<keyword id="KW-0819">tRNA processing</keyword>
<feature type="chain" id="PRO_0000345762" description="tRNA modification GTPase MnmE">
    <location>
        <begin position="1"/>
        <end position="454"/>
    </location>
</feature>
<feature type="domain" description="TrmE-type G">
    <location>
        <begin position="216"/>
        <end position="377"/>
    </location>
</feature>
<feature type="binding site" evidence="1">
    <location>
        <position position="23"/>
    </location>
    <ligand>
        <name>(6S)-5-formyl-5,6,7,8-tetrahydrofolate</name>
        <dbReference type="ChEBI" id="CHEBI:57457"/>
    </ligand>
</feature>
<feature type="binding site" evidence="1">
    <location>
        <position position="80"/>
    </location>
    <ligand>
        <name>(6S)-5-formyl-5,6,7,8-tetrahydrofolate</name>
        <dbReference type="ChEBI" id="CHEBI:57457"/>
    </ligand>
</feature>
<feature type="binding site" evidence="1">
    <location>
        <position position="120"/>
    </location>
    <ligand>
        <name>(6S)-5-formyl-5,6,7,8-tetrahydrofolate</name>
        <dbReference type="ChEBI" id="CHEBI:57457"/>
    </ligand>
</feature>
<feature type="binding site" evidence="1">
    <location>
        <begin position="226"/>
        <end position="231"/>
    </location>
    <ligand>
        <name>GTP</name>
        <dbReference type="ChEBI" id="CHEBI:37565"/>
    </ligand>
</feature>
<feature type="binding site" evidence="1">
    <location>
        <position position="226"/>
    </location>
    <ligand>
        <name>K(+)</name>
        <dbReference type="ChEBI" id="CHEBI:29103"/>
    </ligand>
</feature>
<feature type="binding site" evidence="1">
    <location>
        <position position="230"/>
    </location>
    <ligand>
        <name>Mg(2+)</name>
        <dbReference type="ChEBI" id="CHEBI:18420"/>
    </ligand>
</feature>
<feature type="binding site" evidence="1">
    <location>
        <begin position="245"/>
        <end position="251"/>
    </location>
    <ligand>
        <name>GTP</name>
        <dbReference type="ChEBI" id="CHEBI:37565"/>
    </ligand>
</feature>
<feature type="binding site" evidence="1">
    <location>
        <position position="245"/>
    </location>
    <ligand>
        <name>K(+)</name>
        <dbReference type="ChEBI" id="CHEBI:29103"/>
    </ligand>
</feature>
<feature type="binding site" evidence="1">
    <location>
        <position position="247"/>
    </location>
    <ligand>
        <name>K(+)</name>
        <dbReference type="ChEBI" id="CHEBI:29103"/>
    </ligand>
</feature>
<feature type="binding site" evidence="1">
    <location>
        <position position="250"/>
    </location>
    <ligand>
        <name>K(+)</name>
        <dbReference type="ChEBI" id="CHEBI:29103"/>
    </ligand>
</feature>
<feature type="binding site" evidence="1">
    <location>
        <position position="251"/>
    </location>
    <ligand>
        <name>Mg(2+)</name>
        <dbReference type="ChEBI" id="CHEBI:18420"/>
    </ligand>
</feature>
<feature type="binding site" evidence="1">
    <location>
        <begin position="270"/>
        <end position="273"/>
    </location>
    <ligand>
        <name>GTP</name>
        <dbReference type="ChEBI" id="CHEBI:37565"/>
    </ligand>
</feature>
<feature type="binding site" evidence="1">
    <location>
        <begin position="335"/>
        <end position="338"/>
    </location>
    <ligand>
        <name>GTP</name>
        <dbReference type="ChEBI" id="CHEBI:37565"/>
    </ligand>
</feature>
<feature type="binding site" evidence="1">
    <location>
        <begin position="358"/>
        <end position="360"/>
    </location>
    <ligand>
        <name>GTP</name>
        <dbReference type="ChEBI" id="CHEBI:37565"/>
    </ligand>
</feature>
<feature type="binding site" evidence="1">
    <location>
        <position position="454"/>
    </location>
    <ligand>
        <name>(6S)-5-formyl-5,6,7,8-tetrahydrofolate</name>
        <dbReference type="ChEBI" id="CHEBI:57457"/>
    </ligand>
</feature>
<accession>A8ACL8</accession>
<name>MNME_CITK8</name>
<reference key="1">
    <citation type="submission" date="2007-08" db="EMBL/GenBank/DDBJ databases">
        <authorList>
            <consortium name="The Citrobacter koseri Genome Sequencing Project"/>
            <person name="McClelland M."/>
            <person name="Sanderson E.K."/>
            <person name="Porwollik S."/>
            <person name="Spieth J."/>
            <person name="Clifton W.S."/>
            <person name="Latreille P."/>
            <person name="Courtney L."/>
            <person name="Wang C."/>
            <person name="Pepin K."/>
            <person name="Bhonagiri V."/>
            <person name="Nash W."/>
            <person name="Johnson M."/>
            <person name="Thiruvilangam P."/>
            <person name="Wilson R."/>
        </authorList>
    </citation>
    <scope>NUCLEOTIDE SEQUENCE [LARGE SCALE GENOMIC DNA]</scope>
    <source>
        <strain>ATCC BAA-895 / CDC 4225-83 / SGSC4696</strain>
    </source>
</reference>
<protein>
    <recommendedName>
        <fullName evidence="1">tRNA modification GTPase MnmE</fullName>
        <ecNumber evidence="1">3.6.-.-</ecNumber>
    </recommendedName>
</protein>
<gene>
    <name evidence="1" type="primary">mnmE</name>
    <name evidence="1" type="synonym">trmE</name>
    <name type="ordered locus">CKO_00052</name>
</gene>
<comment type="function">
    <text evidence="1">Exhibits a very high intrinsic GTPase hydrolysis rate. Involved in the addition of a carboxymethylaminomethyl (cmnm) group at the wobble position (U34) of certain tRNAs, forming tRNA-cmnm(5)s(2)U34.</text>
</comment>
<comment type="cofactor">
    <cofactor evidence="1">
        <name>K(+)</name>
        <dbReference type="ChEBI" id="CHEBI:29103"/>
    </cofactor>
    <text evidence="1">Binds 1 potassium ion per subunit.</text>
</comment>
<comment type="subunit">
    <text evidence="1">Homodimer. Heterotetramer of two MnmE and two MnmG subunits.</text>
</comment>
<comment type="subcellular location">
    <subcellularLocation>
        <location evidence="1">Cytoplasm</location>
    </subcellularLocation>
</comment>
<comment type="similarity">
    <text evidence="1">Belongs to the TRAFAC class TrmE-Era-EngA-EngB-Septin-like GTPase superfamily. TrmE GTPase family.</text>
</comment>
<comment type="sequence caution" evidence="2">
    <conflict type="erroneous initiation">
        <sequence resource="EMBL-CDS" id="ABV11231"/>
    </conflict>
</comment>
<sequence>MSHNDTIVAQATPPGRGGVGILRISGLKAREVAEAVLGKLPKPRYADYLPFKDADGTALDQGIALWFPGPNSFTGEDVLELQGHGGPVILDLLLKRILTLPGLRIARPGEFSERAFLNDKLDLAQAEAIADLIDASSEQAARSALNSLQGAFSARVNHLVEALTHLRIYVEAAIDFPDEEIDFLSDGKIEAQLNGVIADLDAVRAEARQGSLLREGMKVVIAGRPNAGKSSLLNALAGREAAIVTDIAGTTRDVLREHIHIDGMPLHIIDTAGLRDASDEVERIGIERAWQEIEQADRVLFMVDGTTTDAVDPAEIWPDFIARLPAKLPITVVRNKADITGETLGISEVNGHSLVRLSARTGEGVDVLRNHLKQSMGFDTNMEGGFLARRRHLQALAEAAEHLQQGKSQLLGAWAGELLAEELRLAQQALSEITGEFTSDDLLGRIFSSFCIGK</sequence>
<proteinExistence type="inferred from homology"/>
<evidence type="ECO:0000255" key="1">
    <source>
        <dbReference type="HAMAP-Rule" id="MF_00379"/>
    </source>
</evidence>
<evidence type="ECO:0000305" key="2"/>